<proteinExistence type="inferred from homology"/>
<protein>
    <recommendedName>
        <fullName evidence="1">tRNA (guanine-N(1)-)-methyltransferase</fullName>
        <ecNumber evidence="1">2.1.1.228</ecNumber>
    </recommendedName>
    <alternativeName>
        <fullName evidence="1">M1G-methyltransferase</fullName>
    </alternativeName>
    <alternativeName>
        <fullName evidence="1">tRNA [GM37] methyltransferase</fullName>
    </alternativeName>
</protein>
<feature type="chain" id="PRO_0000060378" description="tRNA (guanine-N(1)-)-methyltransferase">
    <location>
        <begin position="1"/>
        <end position="254"/>
    </location>
</feature>
<feature type="binding site" evidence="1">
    <location>
        <position position="115"/>
    </location>
    <ligand>
        <name>S-adenosyl-L-methionine</name>
        <dbReference type="ChEBI" id="CHEBI:59789"/>
    </ligand>
</feature>
<feature type="binding site" evidence="1">
    <location>
        <begin position="135"/>
        <end position="140"/>
    </location>
    <ligand>
        <name>S-adenosyl-L-methionine</name>
        <dbReference type="ChEBI" id="CHEBI:59789"/>
    </ligand>
</feature>
<keyword id="KW-0963">Cytoplasm</keyword>
<keyword id="KW-0489">Methyltransferase</keyword>
<keyword id="KW-1185">Reference proteome</keyword>
<keyword id="KW-0949">S-adenosyl-L-methionine</keyword>
<keyword id="KW-0808">Transferase</keyword>
<keyword id="KW-0819">tRNA processing</keyword>
<sequence length="254" mass="28423">MKMKFGIISIFPEMFKAINDFGVTARAIKDSKVSISCFNPRDYTTDRHATVDDTSFGGGAGMVMKYQPLSAAIEDAKNTLGCGTKVVYLSPQGSIFNHRKAQELLQNDSLILLCGRYEGVDERLIQDYVDEEISVGDFVLSGGELPAMLVMDSLIRLLPEVLGNKESVVEDSFYDGLLDYPHYTKPAVLPNGNAVPDVLLSGNHKEIAKWRRKQKLIRTYERRKDLIECLCLSAKDKQILDDYKIDKVSTKGEE</sequence>
<name>TRMD_FRATT</name>
<evidence type="ECO:0000255" key="1">
    <source>
        <dbReference type="HAMAP-Rule" id="MF_00605"/>
    </source>
</evidence>
<dbReference type="EC" id="2.1.1.228" evidence="1"/>
<dbReference type="EMBL" id="AJ749949">
    <property type="protein sequence ID" value="CAG44785.1"/>
    <property type="molecule type" value="Genomic_DNA"/>
</dbReference>
<dbReference type="RefSeq" id="YP_169218.1">
    <property type="nucleotide sequence ID" value="NC_006570.2"/>
</dbReference>
<dbReference type="SMR" id="Q5NIC4"/>
<dbReference type="STRING" id="177416.FTT_0152"/>
<dbReference type="DNASU" id="3192286"/>
<dbReference type="EnsemblBacteria" id="CAG44785">
    <property type="protein sequence ID" value="CAG44785"/>
    <property type="gene ID" value="FTT_0152"/>
</dbReference>
<dbReference type="KEGG" id="ftu:FTT_0152"/>
<dbReference type="PATRIC" id="fig|177416.18.peg.168"/>
<dbReference type="eggNOG" id="COG0336">
    <property type="taxonomic scope" value="Bacteria"/>
</dbReference>
<dbReference type="OrthoDB" id="9807416at2"/>
<dbReference type="Proteomes" id="UP000001174">
    <property type="component" value="Chromosome"/>
</dbReference>
<dbReference type="GO" id="GO:0005829">
    <property type="term" value="C:cytosol"/>
    <property type="evidence" value="ECO:0007669"/>
    <property type="project" value="TreeGrafter"/>
</dbReference>
<dbReference type="GO" id="GO:0052906">
    <property type="term" value="F:tRNA (guanine(37)-N1)-methyltransferase activity"/>
    <property type="evidence" value="ECO:0007669"/>
    <property type="project" value="UniProtKB-UniRule"/>
</dbReference>
<dbReference type="GO" id="GO:0002939">
    <property type="term" value="P:tRNA N1-guanine methylation"/>
    <property type="evidence" value="ECO:0007669"/>
    <property type="project" value="TreeGrafter"/>
</dbReference>
<dbReference type="CDD" id="cd18080">
    <property type="entry name" value="TrmD-like"/>
    <property type="match status" value="1"/>
</dbReference>
<dbReference type="FunFam" id="1.10.1270.20:FF:000001">
    <property type="entry name" value="tRNA (guanine-N(1)-)-methyltransferase"/>
    <property type="match status" value="1"/>
</dbReference>
<dbReference type="FunFam" id="3.40.1280.10:FF:000001">
    <property type="entry name" value="tRNA (guanine-N(1)-)-methyltransferase"/>
    <property type="match status" value="1"/>
</dbReference>
<dbReference type="Gene3D" id="3.40.1280.10">
    <property type="match status" value="1"/>
</dbReference>
<dbReference type="Gene3D" id="1.10.1270.20">
    <property type="entry name" value="tRNA(m1g37)methyltransferase, domain 2"/>
    <property type="match status" value="1"/>
</dbReference>
<dbReference type="HAMAP" id="MF_00605">
    <property type="entry name" value="TrmD"/>
    <property type="match status" value="1"/>
</dbReference>
<dbReference type="InterPro" id="IPR029028">
    <property type="entry name" value="Alpha/beta_knot_MTases"/>
</dbReference>
<dbReference type="InterPro" id="IPR023148">
    <property type="entry name" value="tRNA_m1G_MeTrfase_C_sf"/>
</dbReference>
<dbReference type="InterPro" id="IPR002649">
    <property type="entry name" value="tRNA_m1G_MeTrfase_TrmD"/>
</dbReference>
<dbReference type="InterPro" id="IPR029026">
    <property type="entry name" value="tRNA_m1G_MTases_N"/>
</dbReference>
<dbReference type="InterPro" id="IPR016009">
    <property type="entry name" value="tRNA_MeTrfase_TRMD/TRM10"/>
</dbReference>
<dbReference type="NCBIfam" id="NF000648">
    <property type="entry name" value="PRK00026.1"/>
    <property type="match status" value="1"/>
</dbReference>
<dbReference type="NCBIfam" id="TIGR00088">
    <property type="entry name" value="trmD"/>
    <property type="match status" value="1"/>
</dbReference>
<dbReference type="PANTHER" id="PTHR46417">
    <property type="entry name" value="TRNA (GUANINE-N(1)-)-METHYLTRANSFERASE"/>
    <property type="match status" value="1"/>
</dbReference>
<dbReference type="PANTHER" id="PTHR46417:SF1">
    <property type="entry name" value="TRNA (GUANINE-N(1)-)-METHYLTRANSFERASE"/>
    <property type="match status" value="1"/>
</dbReference>
<dbReference type="Pfam" id="PF01746">
    <property type="entry name" value="tRNA_m1G_MT"/>
    <property type="match status" value="1"/>
</dbReference>
<dbReference type="PIRSF" id="PIRSF000386">
    <property type="entry name" value="tRNA_mtase"/>
    <property type="match status" value="1"/>
</dbReference>
<dbReference type="SUPFAM" id="SSF75217">
    <property type="entry name" value="alpha/beta knot"/>
    <property type="match status" value="1"/>
</dbReference>
<comment type="function">
    <text evidence="1">Specifically methylates guanosine-37 in various tRNAs.</text>
</comment>
<comment type="catalytic activity">
    <reaction evidence="1">
        <text>guanosine(37) in tRNA + S-adenosyl-L-methionine = N(1)-methylguanosine(37) in tRNA + S-adenosyl-L-homocysteine + H(+)</text>
        <dbReference type="Rhea" id="RHEA:36899"/>
        <dbReference type="Rhea" id="RHEA-COMP:10145"/>
        <dbReference type="Rhea" id="RHEA-COMP:10147"/>
        <dbReference type="ChEBI" id="CHEBI:15378"/>
        <dbReference type="ChEBI" id="CHEBI:57856"/>
        <dbReference type="ChEBI" id="CHEBI:59789"/>
        <dbReference type="ChEBI" id="CHEBI:73542"/>
        <dbReference type="ChEBI" id="CHEBI:74269"/>
        <dbReference type="EC" id="2.1.1.228"/>
    </reaction>
</comment>
<comment type="subunit">
    <text evidence="1">Homodimer.</text>
</comment>
<comment type="subcellular location">
    <subcellularLocation>
        <location evidence="1">Cytoplasm</location>
    </subcellularLocation>
</comment>
<comment type="similarity">
    <text evidence="1">Belongs to the RNA methyltransferase TrmD family.</text>
</comment>
<accession>Q5NIC4</accession>
<gene>
    <name evidence="1" type="primary">trmD</name>
    <name type="ordered locus">FTT_0152</name>
</gene>
<reference key="1">
    <citation type="journal article" date="2005" name="Nat. Genet.">
        <title>The complete genome sequence of Francisella tularensis, the causative agent of tularemia.</title>
        <authorList>
            <person name="Larsson P."/>
            <person name="Oyston P.C.F."/>
            <person name="Chain P."/>
            <person name="Chu M.C."/>
            <person name="Duffield M."/>
            <person name="Fuxelius H.-H."/>
            <person name="Garcia E."/>
            <person name="Haelltorp G."/>
            <person name="Johansson D."/>
            <person name="Isherwood K.E."/>
            <person name="Karp P.D."/>
            <person name="Larsson E."/>
            <person name="Liu Y."/>
            <person name="Michell S."/>
            <person name="Prior J."/>
            <person name="Prior R."/>
            <person name="Malfatti S."/>
            <person name="Sjoestedt A."/>
            <person name="Svensson K."/>
            <person name="Thompson N."/>
            <person name="Vergez L."/>
            <person name="Wagg J.K."/>
            <person name="Wren B.W."/>
            <person name="Lindler L.E."/>
            <person name="Andersson S.G.E."/>
            <person name="Forsman M."/>
            <person name="Titball R.W."/>
        </authorList>
    </citation>
    <scope>NUCLEOTIDE SEQUENCE [LARGE SCALE GENOMIC DNA]</scope>
    <source>
        <strain>SCHU S4 / Schu 4</strain>
    </source>
</reference>
<organism>
    <name type="scientific">Francisella tularensis subsp. tularensis (strain SCHU S4 / Schu 4)</name>
    <dbReference type="NCBI Taxonomy" id="177416"/>
    <lineage>
        <taxon>Bacteria</taxon>
        <taxon>Pseudomonadati</taxon>
        <taxon>Pseudomonadota</taxon>
        <taxon>Gammaproteobacteria</taxon>
        <taxon>Thiotrichales</taxon>
        <taxon>Francisellaceae</taxon>
        <taxon>Francisella</taxon>
    </lineage>
</organism>